<dbReference type="EMBL" id="CU329670">
    <property type="protein sequence ID" value="CAC36909.2"/>
    <property type="molecule type" value="Genomic_DNA"/>
</dbReference>
<dbReference type="RefSeq" id="XP_001713074.1">
    <property type="nucleotide sequence ID" value="XM_001713022.2"/>
</dbReference>
<dbReference type="SMR" id="Q9C0Z1"/>
<dbReference type="BioGRID" id="280558">
    <property type="interactions" value="1"/>
</dbReference>
<dbReference type="STRING" id="284812.Q9C0Z1"/>
<dbReference type="iPTMnet" id="Q9C0Z1"/>
<dbReference type="PaxDb" id="4896-SPAPB24D3.01.1"/>
<dbReference type="EnsemblFungi" id="SPAPB24D3.01.1">
    <property type="protein sequence ID" value="SPAPB24D3.01.1:pep"/>
    <property type="gene ID" value="SPAPB24D3.01"/>
</dbReference>
<dbReference type="PomBase" id="SPAPB24D3.01"/>
<dbReference type="VEuPathDB" id="FungiDB:SPAPB24D3.01"/>
<dbReference type="eggNOG" id="ENOG502S2DS">
    <property type="taxonomic scope" value="Eukaryota"/>
</dbReference>
<dbReference type="HOGENOM" id="CLU_458675_0_0_1"/>
<dbReference type="InParanoid" id="Q9C0Z1"/>
<dbReference type="OMA" id="KPDCSNC"/>
<dbReference type="PhylomeDB" id="Q9C0Z1"/>
<dbReference type="PRO" id="PR:Q9C0Z1"/>
<dbReference type="Proteomes" id="UP000002485">
    <property type="component" value="Chromosome I"/>
</dbReference>
<dbReference type="GO" id="GO:0000785">
    <property type="term" value="C:chromatin"/>
    <property type="evidence" value="ECO:0000314"/>
    <property type="project" value="PomBase"/>
</dbReference>
<dbReference type="GO" id="GO:0016020">
    <property type="term" value="C:membrane"/>
    <property type="evidence" value="ECO:0007669"/>
    <property type="project" value="UniProtKB-SubCell"/>
</dbReference>
<dbReference type="GO" id="GO:0005634">
    <property type="term" value="C:nucleus"/>
    <property type="evidence" value="ECO:0007005"/>
    <property type="project" value="PomBase"/>
</dbReference>
<dbReference type="GO" id="GO:0000981">
    <property type="term" value="F:DNA-binding transcription factor activity, RNA polymerase II-specific"/>
    <property type="evidence" value="ECO:0000315"/>
    <property type="project" value="PomBase"/>
</dbReference>
<dbReference type="GO" id="GO:0000978">
    <property type="term" value="F:RNA polymerase II cis-regulatory region sequence-specific DNA binding"/>
    <property type="evidence" value="ECO:0000255"/>
    <property type="project" value="PomBase"/>
</dbReference>
<dbReference type="GO" id="GO:0043565">
    <property type="term" value="F:sequence-specific DNA binding"/>
    <property type="evidence" value="ECO:0000318"/>
    <property type="project" value="GO_Central"/>
</dbReference>
<dbReference type="GO" id="GO:0008270">
    <property type="term" value="F:zinc ion binding"/>
    <property type="evidence" value="ECO:0000255"/>
    <property type="project" value="PomBase"/>
</dbReference>
<dbReference type="GO" id="GO:0006351">
    <property type="term" value="P:DNA-templated transcription"/>
    <property type="evidence" value="ECO:0007669"/>
    <property type="project" value="InterPro"/>
</dbReference>
<dbReference type="GO" id="GO:0045944">
    <property type="term" value="P:positive regulation of transcription by RNA polymerase II"/>
    <property type="evidence" value="ECO:0000318"/>
    <property type="project" value="GO_Central"/>
</dbReference>
<dbReference type="GO" id="GO:0006357">
    <property type="term" value="P:regulation of transcription by RNA polymerase II"/>
    <property type="evidence" value="ECO:0000315"/>
    <property type="project" value="PomBase"/>
</dbReference>
<dbReference type="CDD" id="cd12148">
    <property type="entry name" value="fungal_TF_MHR"/>
    <property type="match status" value="1"/>
</dbReference>
<dbReference type="CDD" id="cd00067">
    <property type="entry name" value="GAL4"/>
    <property type="match status" value="1"/>
</dbReference>
<dbReference type="FunFam" id="4.10.240.10:FF:000028">
    <property type="entry name" value="Uncharacterized transcriptional regulatory protein C1773.12"/>
    <property type="match status" value="1"/>
</dbReference>
<dbReference type="Gene3D" id="4.10.240.10">
    <property type="entry name" value="Zn(2)-C6 fungal-type DNA-binding domain"/>
    <property type="match status" value="1"/>
</dbReference>
<dbReference type="InterPro" id="IPR050987">
    <property type="entry name" value="AtrR-like"/>
</dbReference>
<dbReference type="InterPro" id="IPR007219">
    <property type="entry name" value="Transcription_factor_dom_fun"/>
</dbReference>
<dbReference type="InterPro" id="IPR036864">
    <property type="entry name" value="Zn2-C6_fun-type_DNA-bd_sf"/>
</dbReference>
<dbReference type="InterPro" id="IPR001138">
    <property type="entry name" value="Zn2Cys6_DnaBD"/>
</dbReference>
<dbReference type="PANTHER" id="PTHR46910">
    <property type="entry name" value="TRANSCRIPTION FACTOR PDR1"/>
    <property type="match status" value="1"/>
</dbReference>
<dbReference type="PANTHER" id="PTHR46910:SF37">
    <property type="entry name" value="ZN(II)2CYS6 TRANSCRIPTION FACTOR (EUROFUNG)"/>
    <property type="match status" value="1"/>
</dbReference>
<dbReference type="Pfam" id="PF04082">
    <property type="entry name" value="Fungal_trans"/>
    <property type="match status" value="1"/>
</dbReference>
<dbReference type="Pfam" id="PF00172">
    <property type="entry name" value="Zn_clus"/>
    <property type="match status" value="1"/>
</dbReference>
<dbReference type="SMART" id="SM00906">
    <property type="entry name" value="Fungal_trans"/>
    <property type="match status" value="1"/>
</dbReference>
<dbReference type="SMART" id="SM00066">
    <property type="entry name" value="GAL4"/>
    <property type="match status" value="1"/>
</dbReference>
<dbReference type="SUPFAM" id="SSF57701">
    <property type="entry name" value="Zn2/Cys6 DNA-binding domain"/>
    <property type="match status" value="1"/>
</dbReference>
<dbReference type="PROSITE" id="PS00463">
    <property type="entry name" value="ZN2_CY6_FUNGAL_1"/>
    <property type="match status" value="1"/>
</dbReference>
<dbReference type="PROSITE" id="PS50048">
    <property type="entry name" value="ZN2_CY6_FUNGAL_2"/>
    <property type="match status" value="1"/>
</dbReference>
<name>YKM1_SCHPO</name>
<reference key="1">
    <citation type="journal article" date="2002" name="Nature">
        <title>The genome sequence of Schizosaccharomyces pombe.</title>
        <authorList>
            <person name="Wood V."/>
            <person name="Gwilliam R."/>
            <person name="Rajandream M.A."/>
            <person name="Lyne M.H."/>
            <person name="Lyne R."/>
            <person name="Stewart A."/>
            <person name="Sgouros J.G."/>
            <person name="Peat N."/>
            <person name="Hayles J."/>
            <person name="Baker S.G."/>
            <person name="Basham D."/>
            <person name="Bowman S."/>
            <person name="Brooks K."/>
            <person name="Brown D."/>
            <person name="Brown S."/>
            <person name="Chillingworth T."/>
            <person name="Churcher C.M."/>
            <person name="Collins M."/>
            <person name="Connor R."/>
            <person name="Cronin A."/>
            <person name="Davis P."/>
            <person name="Feltwell T."/>
            <person name="Fraser A."/>
            <person name="Gentles S."/>
            <person name="Goble A."/>
            <person name="Hamlin N."/>
            <person name="Harris D.E."/>
            <person name="Hidalgo J."/>
            <person name="Hodgson G."/>
            <person name="Holroyd S."/>
            <person name="Hornsby T."/>
            <person name="Howarth S."/>
            <person name="Huckle E.J."/>
            <person name="Hunt S."/>
            <person name="Jagels K."/>
            <person name="James K.D."/>
            <person name="Jones L."/>
            <person name="Jones M."/>
            <person name="Leather S."/>
            <person name="McDonald S."/>
            <person name="McLean J."/>
            <person name="Mooney P."/>
            <person name="Moule S."/>
            <person name="Mungall K.L."/>
            <person name="Murphy L.D."/>
            <person name="Niblett D."/>
            <person name="Odell C."/>
            <person name="Oliver K."/>
            <person name="O'Neil S."/>
            <person name="Pearson D."/>
            <person name="Quail M.A."/>
            <person name="Rabbinowitsch E."/>
            <person name="Rutherford K.M."/>
            <person name="Rutter S."/>
            <person name="Saunders D."/>
            <person name="Seeger K."/>
            <person name="Sharp S."/>
            <person name="Skelton J."/>
            <person name="Simmonds M.N."/>
            <person name="Squares R."/>
            <person name="Squares S."/>
            <person name="Stevens K."/>
            <person name="Taylor K."/>
            <person name="Taylor R.G."/>
            <person name="Tivey A."/>
            <person name="Walsh S.V."/>
            <person name="Warren T."/>
            <person name="Whitehead S."/>
            <person name="Woodward J.R."/>
            <person name="Volckaert G."/>
            <person name="Aert R."/>
            <person name="Robben J."/>
            <person name="Grymonprez B."/>
            <person name="Weltjens I."/>
            <person name="Vanstreels E."/>
            <person name="Rieger M."/>
            <person name="Schaefer M."/>
            <person name="Mueller-Auer S."/>
            <person name="Gabel C."/>
            <person name="Fuchs M."/>
            <person name="Duesterhoeft A."/>
            <person name="Fritzc C."/>
            <person name="Holzer E."/>
            <person name="Moestl D."/>
            <person name="Hilbert H."/>
            <person name="Borzym K."/>
            <person name="Langer I."/>
            <person name="Beck A."/>
            <person name="Lehrach H."/>
            <person name="Reinhardt R."/>
            <person name="Pohl T.M."/>
            <person name="Eger P."/>
            <person name="Zimmermann W."/>
            <person name="Wedler H."/>
            <person name="Wambutt R."/>
            <person name="Purnelle B."/>
            <person name="Goffeau A."/>
            <person name="Cadieu E."/>
            <person name="Dreano S."/>
            <person name="Gloux S."/>
            <person name="Lelaure V."/>
            <person name="Mottier S."/>
            <person name="Galibert F."/>
            <person name="Aves S.J."/>
            <person name="Xiang Z."/>
            <person name="Hunt C."/>
            <person name="Moore K."/>
            <person name="Hurst S.M."/>
            <person name="Lucas M."/>
            <person name="Rochet M."/>
            <person name="Gaillardin C."/>
            <person name="Tallada V.A."/>
            <person name="Garzon A."/>
            <person name="Thode G."/>
            <person name="Daga R.R."/>
            <person name="Cruzado L."/>
            <person name="Jimenez J."/>
            <person name="Sanchez M."/>
            <person name="del Rey F."/>
            <person name="Benito J."/>
            <person name="Dominguez A."/>
            <person name="Revuelta J.L."/>
            <person name="Moreno S."/>
            <person name="Armstrong J."/>
            <person name="Forsburg S.L."/>
            <person name="Cerutti L."/>
            <person name="Lowe T."/>
            <person name="McCombie W.R."/>
            <person name="Paulsen I."/>
            <person name="Potashkin J."/>
            <person name="Shpakovski G.V."/>
            <person name="Ussery D."/>
            <person name="Barrell B.G."/>
            <person name="Nurse P."/>
        </authorList>
    </citation>
    <scope>NUCLEOTIDE SEQUENCE [LARGE SCALE GENOMIC DNA]</scope>
    <source>
        <strain>972 / ATCC 24843</strain>
    </source>
</reference>
<reference key="2">
    <citation type="journal article" date="2006" name="Nat. Biotechnol.">
        <title>ORFeome cloning and global analysis of protein localization in the fission yeast Schizosaccharomyces pombe.</title>
        <authorList>
            <person name="Matsuyama A."/>
            <person name="Arai R."/>
            <person name="Yashiroda Y."/>
            <person name="Shirai A."/>
            <person name="Kamata A."/>
            <person name="Sekido S."/>
            <person name="Kobayashi Y."/>
            <person name="Hashimoto A."/>
            <person name="Hamamoto M."/>
            <person name="Hiraoka Y."/>
            <person name="Horinouchi S."/>
            <person name="Yoshida M."/>
        </authorList>
    </citation>
    <scope>SUBCELLULAR LOCATION [LARGE SCALE ANALYSIS]</scope>
</reference>
<proteinExistence type="inferred from homology"/>
<gene>
    <name type="ORF">SPAPB24D3.01</name>
    <name type="ORF">SPAPB2C8.02</name>
</gene>
<comment type="subcellular location">
    <subcellularLocation>
        <location evidence="2 3">Nucleus</location>
    </subcellularLocation>
    <subcellularLocation>
        <location evidence="4">Membrane</location>
        <topology evidence="4">Single-pass membrane protein</topology>
    </subcellularLocation>
</comment>
<protein>
    <recommendedName>
        <fullName>Uncharacterized transcriptional regulatory protein PB24D3.01</fullName>
    </recommendedName>
</protein>
<organism>
    <name type="scientific">Schizosaccharomyces pombe (strain 972 / ATCC 24843)</name>
    <name type="common">Fission yeast</name>
    <dbReference type="NCBI Taxonomy" id="284812"/>
    <lineage>
        <taxon>Eukaryota</taxon>
        <taxon>Fungi</taxon>
        <taxon>Dikarya</taxon>
        <taxon>Ascomycota</taxon>
        <taxon>Taphrinomycotina</taxon>
        <taxon>Schizosaccharomycetes</taxon>
        <taxon>Schizosaccharomycetales</taxon>
        <taxon>Schizosaccharomycetaceae</taxon>
        <taxon>Schizosaccharomyces</taxon>
    </lineage>
</organism>
<sequence>MTSVEKASKACELCRRKKIRCNRELPSCQNCIVYQEECHYSKRLKRSYSATKKKNGNPVLESAIPSLSPSPSIENGSAMLNSDITSLSNRIFKVEEKLDLILSLLKNSSEPLDRTERKDFPSLAMQIRDANSLVNTKLKEYSRRFELPSQKTSFDDLFSSTFPNFDAAFKDIPDKEWAFENVQWYFRYINCWWPVFYEKDFMDEYECLYRDRNQVKGAWLVSFYSVLALAASRSKAGKDQKLAESFFSTSWYLIQKPGFFLTPQLEKIQALLIMIQFAAHVSLHTLCKALCGQACLMIRDLNLHRESANADFSNKDAELRRRVFWICYIFEITTSLVFGTPSVLSDMDIDCEHPNYEYGRYFSEMPTGDLIFSSEVSLTILKNEVRTKVYSRTNTSNARNREKAIWQIHEKLLCWERALPIELRQYFIALTENAQIYEELDFEKQRLFSACIEVYLSYCNTLIFLHRLNESVEGANICLDTARRAINVLKFFFIIPIAKNVCYLWVFLYCPFTPFLVLFSNIVNGKEPSTDIAFEDLNRMYSVNRFFVKLRDIGGDLAEKLASVTENFIHAAENYFAVQPAFMADAFDFASFLT</sequence>
<keyword id="KW-0238">DNA-binding</keyword>
<keyword id="KW-0472">Membrane</keyword>
<keyword id="KW-0479">Metal-binding</keyword>
<keyword id="KW-0539">Nucleus</keyword>
<keyword id="KW-1185">Reference proteome</keyword>
<keyword id="KW-0804">Transcription</keyword>
<keyword id="KW-0805">Transcription regulation</keyword>
<keyword id="KW-0812">Transmembrane</keyword>
<keyword id="KW-1133">Transmembrane helix</keyword>
<keyword id="KW-0862">Zinc</keyword>
<accession>Q9C0Z1</accession>
<accession>Q9C0Y1</accession>
<feature type="chain" id="PRO_0000115012" description="Uncharacterized transcriptional regulatory protein PB24D3.01">
    <location>
        <begin position="1"/>
        <end position="594"/>
    </location>
</feature>
<feature type="transmembrane region" description="Helical" evidence="1">
    <location>
        <begin position="503"/>
        <end position="523"/>
    </location>
</feature>
<feature type="DNA-binding region" description="Zn(2)-C6 fungal-type" evidence="2">
    <location>
        <begin position="11"/>
        <end position="38"/>
    </location>
</feature>
<evidence type="ECO:0000255" key="1"/>
<evidence type="ECO:0000255" key="2">
    <source>
        <dbReference type="PROSITE-ProRule" id="PRU00227"/>
    </source>
</evidence>
<evidence type="ECO:0000269" key="3">
    <source>
    </source>
</evidence>
<evidence type="ECO:0000305" key="4"/>